<organism>
    <name type="scientific">Bacillus cereus (strain AH187)</name>
    <dbReference type="NCBI Taxonomy" id="405534"/>
    <lineage>
        <taxon>Bacteria</taxon>
        <taxon>Bacillati</taxon>
        <taxon>Bacillota</taxon>
        <taxon>Bacilli</taxon>
        <taxon>Bacillales</taxon>
        <taxon>Bacillaceae</taxon>
        <taxon>Bacillus</taxon>
        <taxon>Bacillus cereus group</taxon>
    </lineage>
</organism>
<name>HPR_BACC7</name>
<gene>
    <name evidence="1" type="primary">hpr</name>
    <name type="ordered locus">BCAH187_A1210</name>
</gene>
<feature type="chain" id="PRO_1000188795" description="HTH-type transcriptional regulator Hpr">
    <location>
        <begin position="1"/>
        <end position="185"/>
    </location>
</feature>
<feature type="domain" description="HTH marR-type" evidence="1">
    <location>
        <begin position="13"/>
        <end position="157"/>
    </location>
</feature>
<feature type="DNA-binding region" description="H-T-H motif" evidence="1">
    <location>
        <begin position="63"/>
        <end position="86"/>
    </location>
</feature>
<keyword id="KW-0238">DNA-binding</keyword>
<keyword id="KW-0678">Repressor</keyword>
<keyword id="KW-0749">Sporulation</keyword>
<keyword id="KW-0804">Transcription</keyword>
<keyword id="KW-0805">Transcription regulation</keyword>
<sequence>MKSGEKDYSVKEAMIFSQRIAQLSKALWKCVEKDWQMWIKPYDLNINEHHILTIAYHLKGASISEIAKFGVMHVSTAFNFSKKLEERGYLVFSKKEDDKRNTYIEITDKGEELLLRLMEEYDPENNSVFNGALALRNFYGKFPENIELIAILRNIYGQDFIDIFEKSLEDIEENFTESDQKLVKK</sequence>
<evidence type="ECO:0000255" key="1">
    <source>
        <dbReference type="HAMAP-Rule" id="MF_01911"/>
    </source>
</evidence>
<comment type="function">
    <text evidence="1">Negative regulator of protease production and sporulation.</text>
</comment>
<comment type="subunit">
    <text evidence="1">Homodimer.</text>
</comment>
<reference key="1">
    <citation type="submission" date="2008-10" db="EMBL/GenBank/DDBJ databases">
        <title>Genome sequence of Bacillus cereus AH187.</title>
        <authorList>
            <person name="Dodson R.J."/>
            <person name="Durkin A.S."/>
            <person name="Rosovitz M.J."/>
            <person name="Rasko D.A."/>
            <person name="Kolsto A.B."/>
            <person name="Okstad O.A."/>
            <person name="Ravel J."/>
            <person name="Sutton G."/>
        </authorList>
    </citation>
    <scope>NUCLEOTIDE SEQUENCE [LARGE SCALE GENOMIC DNA]</scope>
    <source>
        <strain>AH187</strain>
    </source>
</reference>
<proteinExistence type="inferred from homology"/>
<protein>
    <recommendedName>
        <fullName evidence="1">HTH-type transcriptional regulator Hpr</fullName>
    </recommendedName>
    <alternativeName>
        <fullName evidence="1">Protease production regulatory protein Hpr</fullName>
    </alternativeName>
</protein>
<accession>B7HZH8</accession>
<dbReference type="EMBL" id="CP001177">
    <property type="protein sequence ID" value="ACJ77731.1"/>
    <property type="molecule type" value="Genomic_DNA"/>
</dbReference>
<dbReference type="SMR" id="B7HZH8"/>
<dbReference type="KEGG" id="bcr:BCAH187_A1210"/>
<dbReference type="HOGENOM" id="CLU_115790_0_0_9"/>
<dbReference type="Proteomes" id="UP000002214">
    <property type="component" value="Chromosome"/>
</dbReference>
<dbReference type="GO" id="GO:0003677">
    <property type="term" value="F:DNA binding"/>
    <property type="evidence" value="ECO:0007669"/>
    <property type="project" value="UniProtKB-UniRule"/>
</dbReference>
<dbReference type="GO" id="GO:0003700">
    <property type="term" value="F:DNA-binding transcription factor activity"/>
    <property type="evidence" value="ECO:0007669"/>
    <property type="project" value="UniProtKB-UniRule"/>
</dbReference>
<dbReference type="GO" id="GO:0045892">
    <property type="term" value="P:negative regulation of DNA-templated transcription"/>
    <property type="evidence" value="ECO:0007669"/>
    <property type="project" value="UniProtKB-UniRule"/>
</dbReference>
<dbReference type="GO" id="GO:0006950">
    <property type="term" value="P:response to stress"/>
    <property type="evidence" value="ECO:0007669"/>
    <property type="project" value="TreeGrafter"/>
</dbReference>
<dbReference type="GO" id="GO:0030435">
    <property type="term" value="P:sporulation resulting in formation of a cellular spore"/>
    <property type="evidence" value="ECO:0007669"/>
    <property type="project" value="UniProtKB-UniRule"/>
</dbReference>
<dbReference type="FunFam" id="1.10.10.10:FF:000194">
    <property type="entry name" value="HTH-type transcriptional regulator Hpr"/>
    <property type="match status" value="1"/>
</dbReference>
<dbReference type="Gene3D" id="1.10.10.10">
    <property type="entry name" value="Winged helix-like DNA-binding domain superfamily/Winged helix DNA-binding domain"/>
    <property type="match status" value="1"/>
</dbReference>
<dbReference type="HAMAP" id="MF_01911">
    <property type="entry name" value="HTH_type_Hpr"/>
    <property type="match status" value="1"/>
</dbReference>
<dbReference type="InterPro" id="IPR000835">
    <property type="entry name" value="HTH_MarR-typ"/>
</dbReference>
<dbReference type="InterPro" id="IPR023488">
    <property type="entry name" value="HTH_tscrpt_reg_Hpr"/>
</dbReference>
<dbReference type="InterPro" id="IPR039422">
    <property type="entry name" value="MarR/SlyA-like"/>
</dbReference>
<dbReference type="InterPro" id="IPR023187">
    <property type="entry name" value="Tscrpt_reg_MarR-type_CS"/>
</dbReference>
<dbReference type="InterPro" id="IPR036388">
    <property type="entry name" value="WH-like_DNA-bd_sf"/>
</dbReference>
<dbReference type="InterPro" id="IPR036390">
    <property type="entry name" value="WH_DNA-bd_sf"/>
</dbReference>
<dbReference type="NCBIfam" id="NF010349">
    <property type="entry name" value="PRK13777.1"/>
    <property type="match status" value="1"/>
</dbReference>
<dbReference type="PANTHER" id="PTHR33164:SF58">
    <property type="entry name" value="DNA-BINDING TRANSCRIPTIONAL REPRESSOR SCOC"/>
    <property type="match status" value="1"/>
</dbReference>
<dbReference type="PANTHER" id="PTHR33164">
    <property type="entry name" value="TRANSCRIPTIONAL REGULATOR, MARR FAMILY"/>
    <property type="match status" value="1"/>
</dbReference>
<dbReference type="Pfam" id="PF01047">
    <property type="entry name" value="MarR"/>
    <property type="match status" value="1"/>
</dbReference>
<dbReference type="SMART" id="SM00347">
    <property type="entry name" value="HTH_MARR"/>
    <property type="match status" value="1"/>
</dbReference>
<dbReference type="SUPFAM" id="SSF46785">
    <property type="entry name" value="Winged helix' DNA-binding domain"/>
    <property type="match status" value="1"/>
</dbReference>
<dbReference type="PROSITE" id="PS01117">
    <property type="entry name" value="HTH_MARR_1"/>
    <property type="match status" value="1"/>
</dbReference>
<dbReference type="PROSITE" id="PS50995">
    <property type="entry name" value="HTH_MARR_2"/>
    <property type="match status" value="1"/>
</dbReference>